<feature type="chain" id="PRO_0000085940" description="Dual specificity tyrosine-phosphorylation-regulated kinase 4">
    <location>
        <begin position="1"/>
        <end position="520"/>
    </location>
</feature>
<feature type="domain" description="Protein kinase" evidence="2">
    <location>
        <begin position="104"/>
        <end position="400"/>
    </location>
</feature>
<feature type="region of interest" description="Disordered" evidence="4">
    <location>
        <begin position="1"/>
        <end position="32"/>
    </location>
</feature>
<feature type="region of interest" description="Disordered" evidence="4">
    <location>
        <begin position="404"/>
        <end position="467"/>
    </location>
</feature>
<feature type="compositionally biased region" description="Basic and acidic residues" evidence="4">
    <location>
        <begin position="20"/>
        <end position="29"/>
    </location>
</feature>
<feature type="compositionally biased region" description="Basic and acidic residues" evidence="4">
    <location>
        <begin position="439"/>
        <end position="457"/>
    </location>
</feature>
<feature type="active site" description="Proton acceptor" evidence="2 3">
    <location>
        <position position="230"/>
    </location>
</feature>
<feature type="binding site" evidence="2">
    <location>
        <begin position="110"/>
        <end position="118"/>
    </location>
    <ligand>
        <name>ATP</name>
        <dbReference type="ChEBI" id="CHEBI:30616"/>
    </ligand>
</feature>
<feature type="binding site">
    <location>
        <position position="133"/>
    </location>
    <ligand>
        <name>ATP</name>
        <dbReference type="ChEBI" id="CHEBI:30616"/>
    </ligand>
</feature>
<feature type="binding site" evidence="2">
    <location>
        <begin position="183"/>
        <end position="186"/>
    </location>
    <ligand>
        <name>ATP</name>
        <dbReference type="ChEBI" id="CHEBI:30616"/>
    </ligand>
</feature>
<feature type="modified residue" description="Phosphotyrosine; by autocatalysis" evidence="8">
    <location>
        <position position="264"/>
    </location>
</feature>
<feature type="splice variant" id="VSP_057132" description="In isoform 3." evidence="10">
    <original>M</original>
    <variation>MQLLPPPIRTGTKTQMDAKKPRKCDLTPFLVLKARKKQKFTSAKVGSKLSVQIQKPPSNIKNSRMTQVFHKNTSVTSLPFVDTKGKKNTVSFPHISKKVLLKSSLLYQENQAHNQM</variation>
    <location>
        <position position="1"/>
    </location>
</feature>
<feature type="splice variant" id="VSP_057133" description="In isoform 4." evidence="11">
    <original>M</original>
    <variation>MQLLPPPIRTGTKTQMDAKKPRKCDLTPFLVLKARKKQKFTSAKGPTLSEIYMVGSKLSVQIQKPPSNIKNSRMTQVFHKNTSVTSLPFVDTKGKKNTVSFPHISKKVLLKSSLLYQENQAHNQM</variation>
    <location>
        <position position="1"/>
    </location>
</feature>
<feature type="splice variant" id="VSP_057134" description="In isoform 5." evidence="11">
    <location>
        <begin position="380"/>
        <end position="382"/>
    </location>
</feature>
<feature type="splice variant" id="VSP_013745" description="In isoform 2." evidence="9 12">
    <location>
        <position position="441"/>
    </location>
</feature>
<feature type="sequence variant" id="VAR_033900" description="In dbSNP:rs12306130.">
    <original>A</original>
    <variation>T</variation>
    <location>
        <position position="61"/>
    </location>
</feature>
<feature type="sequence variant" id="VAR_040465" evidence="7">
    <original>A</original>
    <variation>S</variation>
    <location>
        <position position="70"/>
    </location>
</feature>
<feature type="sequence variant" id="VAR_010721" description="In dbSNP:rs746486416." evidence="5">
    <original>V</original>
    <variation>I</variation>
    <location>
        <position position="95"/>
    </location>
</feature>
<feature type="sequence variant" id="VAR_010722" description="In dbSNP:rs3741927." evidence="5">
    <original>N</original>
    <variation>S</variation>
    <location>
        <position position="189"/>
    </location>
</feature>
<feature type="sequence variant" id="VAR_014948" description="In dbSNP:rs1801016.">
    <original>D</original>
    <variation>V</variation>
    <location>
        <position position="454"/>
    </location>
</feature>
<feature type="mutagenesis site" description="Loss of kinase activity." evidence="6">
    <original>K</original>
    <variation>R</variation>
    <location>
        <position position="133"/>
    </location>
</feature>
<feature type="mutagenesis site" description="Abolishes kinase activity." evidence="8">
    <original>Y</original>
    <variation>F</variation>
    <location>
        <position position="264"/>
    </location>
</feature>
<feature type="sequence conflict" description="In Ref. 2; BAF85011." evidence="13" ref="2">
    <original>N</original>
    <variation>I</variation>
    <location>
        <position position="165"/>
    </location>
</feature>
<feature type="short sequence motif" description="Bipartite nuclear localization signal" evidence="8">
    <location sequence="Q9NR20-4">
        <begin position="19"/>
        <end position="37"/>
    </location>
</feature>
<reference key="1">
    <citation type="journal article" date="2000" name="Nat. Genet.">
        <title>Autosomal dominant hypophosphataemic rickets is associated with mutations in FGF23.</title>
        <authorList>
            <person name="White K.E."/>
            <person name="Evans W.E."/>
            <person name="O'Riordan J.L.H."/>
            <person name="Speer M.C."/>
            <person name="Econs M.J."/>
            <person name="Lorenz-Depiereux B."/>
            <person name="Grabowski M."/>
            <person name="Meitinger T."/>
            <person name="Strom T.M."/>
        </authorList>
    </citation>
    <scope>NUCLEOTIDE SEQUENCE [MRNA] (ISOFORM 2)</scope>
    <scope>VARIANTS ILE-95 AND SER-189</scope>
    <source>
        <tissue>Brain</tissue>
        <tissue>Kidney</tissue>
    </source>
</reference>
<reference key="2">
    <citation type="journal article" date="2004" name="Nat. Genet.">
        <title>Complete sequencing and characterization of 21,243 full-length human cDNAs.</title>
        <authorList>
            <person name="Ota T."/>
            <person name="Suzuki Y."/>
            <person name="Nishikawa T."/>
            <person name="Otsuki T."/>
            <person name="Sugiyama T."/>
            <person name="Irie R."/>
            <person name="Wakamatsu A."/>
            <person name="Hayashi K."/>
            <person name="Sato H."/>
            <person name="Nagai K."/>
            <person name="Kimura K."/>
            <person name="Makita H."/>
            <person name="Sekine M."/>
            <person name="Obayashi M."/>
            <person name="Nishi T."/>
            <person name="Shibahara T."/>
            <person name="Tanaka T."/>
            <person name="Ishii S."/>
            <person name="Yamamoto J."/>
            <person name="Saito K."/>
            <person name="Kawai Y."/>
            <person name="Isono Y."/>
            <person name="Nakamura Y."/>
            <person name="Nagahari K."/>
            <person name="Murakami K."/>
            <person name="Yasuda T."/>
            <person name="Iwayanagi T."/>
            <person name="Wagatsuma M."/>
            <person name="Shiratori A."/>
            <person name="Sudo H."/>
            <person name="Hosoiri T."/>
            <person name="Kaku Y."/>
            <person name="Kodaira H."/>
            <person name="Kondo H."/>
            <person name="Sugawara M."/>
            <person name="Takahashi M."/>
            <person name="Kanda K."/>
            <person name="Yokoi T."/>
            <person name="Furuya T."/>
            <person name="Kikkawa E."/>
            <person name="Omura Y."/>
            <person name="Abe K."/>
            <person name="Kamihara K."/>
            <person name="Katsuta N."/>
            <person name="Sato K."/>
            <person name="Tanikawa M."/>
            <person name="Yamazaki M."/>
            <person name="Ninomiya K."/>
            <person name="Ishibashi T."/>
            <person name="Yamashita H."/>
            <person name="Murakawa K."/>
            <person name="Fujimori K."/>
            <person name="Tanai H."/>
            <person name="Kimata M."/>
            <person name="Watanabe M."/>
            <person name="Hiraoka S."/>
            <person name="Chiba Y."/>
            <person name="Ishida S."/>
            <person name="Ono Y."/>
            <person name="Takiguchi S."/>
            <person name="Watanabe S."/>
            <person name="Yosida M."/>
            <person name="Hotuta T."/>
            <person name="Kusano J."/>
            <person name="Kanehori K."/>
            <person name="Takahashi-Fujii A."/>
            <person name="Hara H."/>
            <person name="Tanase T.-O."/>
            <person name="Nomura Y."/>
            <person name="Togiya S."/>
            <person name="Komai F."/>
            <person name="Hara R."/>
            <person name="Takeuchi K."/>
            <person name="Arita M."/>
            <person name="Imose N."/>
            <person name="Musashino K."/>
            <person name="Yuuki H."/>
            <person name="Oshima A."/>
            <person name="Sasaki N."/>
            <person name="Aotsuka S."/>
            <person name="Yoshikawa Y."/>
            <person name="Matsunawa H."/>
            <person name="Ichihara T."/>
            <person name="Shiohata N."/>
            <person name="Sano S."/>
            <person name="Moriya S."/>
            <person name="Momiyama H."/>
            <person name="Satoh N."/>
            <person name="Takami S."/>
            <person name="Terashima Y."/>
            <person name="Suzuki O."/>
            <person name="Nakagawa S."/>
            <person name="Senoh A."/>
            <person name="Mizoguchi H."/>
            <person name="Goto Y."/>
            <person name="Shimizu F."/>
            <person name="Wakebe H."/>
            <person name="Hishigaki H."/>
            <person name="Watanabe T."/>
            <person name="Sugiyama A."/>
            <person name="Takemoto M."/>
            <person name="Kawakami B."/>
            <person name="Yamazaki M."/>
            <person name="Watanabe K."/>
            <person name="Kumagai A."/>
            <person name="Itakura S."/>
            <person name="Fukuzumi Y."/>
            <person name="Fujimori Y."/>
            <person name="Komiyama M."/>
            <person name="Tashiro H."/>
            <person name="Tanigami A."/>
            <person name="Fujiwara T."/>
            <person name="Ono T."/>
            <person name="Yamada K."/>
            <person name="Fujii Y."/>
            <person name="Ozaki K."/>
            <person name="Hirao M."/>
            <person name="Ohmori Y."/>
            <person name="Kawabata A."/>
            <person name="Hikiji T."/>
            <person name="Kobatake N."/>
            <person name="Inagaki H."/>
            <person name="Ikema Y."/>
            <person name="Okamoto S."/>
            <person name="Okitani R."/>
            <person name="Kawakami T."/>
            <person name="Noguchi S."/>
            <person name="Itoh T."/>
            <person name="Shigeta K."/>
            <person name="Senba T."/>
            <person name="Matsumura K."/>
            <person name="Nakajima Y."/>
            <person name="Mizuno T."/>
            <person name="Morinaga M."/>
            <person name="Sasaki M."/>
            <person name="Togashi T."/>
            <person name="Oyama M."/>
            <person name="Hata H."/>
            <person name="Watanabe M."/>
            <person name="Komatsu T."/>
            <person name="Mizushima-Sugano J."/>
            <person name="Satoh T."/>
            <person name="Shirai Y."/>
            <person name="Takahashi Y."/>
            <person name="Nakagawa K."/>
            <person name="Okumura K."/>
            <person name="Nagase T."/>
            <person name="Nomura N."/>
            <person name="Kikuchi H."/>
            <person name="Masuho Y."/>
            <person name="Yamashita R."/>
            <person name="Nakai K."/>
            <person name="Yada T."/>
            <person name="Nakamura Y."/>
            <person name="Ohara O."/>
            <person name="Isogai T."/>
            <person name="Sugano S."/>
        </authorList>
    </citation>
    <scope>NUCLEOTIDE SEQUENCE [LARGE SCALE MRNA] (ISOFORM 1)</scope>
    <scope>NUCLEOTIDE SEQUENCE [LARGE SCALE MRNA] OF 1-430 (ISOFORM 3)</scope>
    <source>
        <tissue>Testis</tissue>
    </source>
</reference>
<reference key="3">
    <citation type="journal article" date="2004" name="Genome Res.">
        <title>The status, quality, and expansion of the NIH full-length cDNA project: the Mammalian Gene Collection (MGC).</title>
        <authorList>
            <consortium name="The MGC Project Team"/>
        </authorList>
    </citation>
    <scope>NUCLEOTIDE SEQUENCE [LARGE SCALE MRNA] (ISOFORM 1)</scope>
    <source>
        <tissue>Testis</tissue>
    </source>
</reference>
<reference key="4">
    <citation type="journal article" date="1998" name="J. Biol. Chem.">
        <title>Sequence characteristics, subcellular localization, and substrate specificity of DYRK-related kinases, a novel family of dual specificity protein kinases.</title>
        <authorList>
            <person name="Becker W."/>
            <person name="Weber Y."/>
            <person name="Wetzel K."/>
            <person name="Eirmbter K."/>
            <person name="Tejedor F.J."/>
            <person name="Joost H.-G."/>
        </authorList>
    </citation>
    <scope>NUCLEOTIDE SEQUENCE [MRNA] OF 280-520 (ISOFORM 2)</scope>
    <source>
        <tissue>Lung</tissue>
    </source>
</reference>
<reference key="5">
    <citation type="journal article" date="2007" name="Mol. Cell. Endocrinol.">
        <title>The expression of the testis-specific Dyrk4 kinase is highly restricted to step 8 spermatids but is not required for male fertility in mice.</title>
        <authorList>
            <person name="Sacher F."/>
            <person name="Moeller C."/>
            <person name="Bone W."/>
            <person name="Gottwald U."/>
            <person name="Fritsch M."/>
        </authorList>
    </citation>
    <scope>SUBCELLULAR LOCATION</scope>
    <scope>MUTAGENESIS OF LYS-133</scope>
</reference>
<reference key="6">
    <citation type="journal article" date="2011" name="J. Biol. Chem.">
        <title>Splice variants of the dual specificity tyrosine phosphorylation-regulated kinase 4 (DYRK4) differ in their subcellular localization and catalytic activity.</title>
        <authorList>
            <person name="Papadopoulos C."/>
            <person name="Arato K."/>
            <person name="Lilienthal E."/>
            <person name="Zerweck J."/>
            <person name="Schutkowski M."/>
            <person name="Chatain N."/>
            <person name="Muller-Newen G."/>
            <person name="Becker W."/>
            <person name="de la Luna S."/>
        </authorList>
    </citation>
    <scope>ALTERNATIVE SPLICING (ISOFORMS 4 AND 5)</scope>
    <scope>SUBCELLULAR LOCATION (ISOFORM 4)</scope>
    <scope>MUTAGENESIS OF TYR-264</scope>
    <scope>PHOSPHORYLATION AT TYR-264</scope>
</reference>
<reference key="7">
    <citation type="journal article" date="2007" name="Nature">
        <title>Patterns of somatic mutation in human cancer genomes.</title>
        <authorList>
            <person name="Greenman C."/>
            <person name="Stephens P."/>
            <person name="Smith R."/>
            <person name="Dalgliesh G.L."/>
            <person name="Hunter C."/>
            <person name="Bignell G."/>
            <person name="Davies H."/>
            <person name="Teague J."/>
            <person name="Butler A."/>
            <person name="Stevens C."/>
            <person name="Edkins S."/>
            <person name="O'Meara S."/>
            <person name="Vastrik I."/>
            <person name="Schmidt E.E."/>
            <person name="Avis T."/>
            <person name="Barthorpe S."/>
            <person name="Bhamra G."/>
            <person name="Buck G."/>
            <person name="Choudhury B."/>
            <person name="Clements J."/>
            <person name="Cole J."/>
            <person name="Dicks E."/>
            <person name="Forbes S."/>
            <person name="Gray K."/>
            <person name="Halliday K."/>
            <person name="Harrison R."/>
            <person name="Hills K."/>
            <person name="Hinton J."/>
            <person name="Jenkinson A."/>
            <person name="Jones D."/>
            <person name="Menzies A."/>
            <person name="Mironenko T."/>
            <person name="Perry J."/>
            <person name="Raine K."/>
            <person name="Richardson D."/>
            <person name="Shepherd R."/>
            <person name="Small A."/>
            <person name="Tofts C."/>
            <person name="Varian J."/>
            <person name="Webb T."/>
            <person name="West S."/>
            <person name="Widaa S."/>
            <person name="Yates A."/>
            <person name="Cahill D.P."/>
            <person name="Louis D.N."/>
            <person name="Goldstraw P."/>
            <person name="Nicholson A.G."/>
            <person name="Brasseur F."/>
            <person name="Looijenga L."/>
            <person name="Weber B.L."/>
            <person name="Chiew Y.-E."/>
            <person name="DeFazio A."/>
            <person name="Greaves M.F."/>
            <person name="Green A.R."/>
            <person name="Campbell P."/>
            <person name="Birney E."/>
            <person name="Easton D.F."/>
            <person name="Chenevix-Trench G."/>
            <person name="Tan M.-H."/>
            <person name="Khoo S.K."/>
            <person name="Teh B.T."/>
            <person name="Yuen S.T."/>
            <person name="Leung S.Y."/>
            <person name="Wooster R."/>
            <person name="Futreal P.A."/>
            <person name="Stratton M.R."/>
        </authorList>
    </citation>
    <scope>VARIANT [LARGE SCALE ANALYSIS] SER-70</scope>
</reference>
<evidence type="ECO:0000250" key="1"/>
<evidence type="ECO:0000255" key="2">
    <source>
        <dbReference type="PROSITE-ProRule" id="PRU00159"/>
    </source>
</evidence>
<evidence type="ECO:0000255" key="3">
    <source>
        <dbReference type="PROSITE-ProRule" id="PRU10027"/>
    </source>
</evidence>
<evidence type="ECO:0000256" key="4">
    <source>
        <dbReference type="SAM" id="MobiDB-lite"/>
    </source>
</evidence>
<evidence type="ECO:0000269" key="5">
    <source>
    </source>
</evidence>
<evidence type="ECO:0000269" key="6">
    <source>
    </source>
</evidence>
<evidence type="ECO:0000269" key="7">
    <source>
    </source>
</evidence>
<evidence type="ECO:0000269" key="8">
    <source>
    </source>
</evidence>
<evidence type="ECO:0000303" key="9">
    <source>
    </source>
</evidence>
<evidence type="ECO:0000303" key="10">
    <source>
    </source>
</evidence>
<evidence type="ECO:0000303" key="11">
    <source>
    </source>
</evidence>
<evidence type="ECO:0000303" key="12">
    <source>
    </source>
</evidence>
<evidence type="ECO:0000305" key="13"/>
<sequence>MPASELKASEIPFHPSIKTQDPKAEEKSPKKQKVTLTAAEALKLFKNQLSPYEQSEILGYAELWFLGLEAKKLDTAPEKFSKTSFDDEHGFYLKVLHDHIAYRYEVLETIGKGSFGQVAKCLDHKNNELVALKIIRNKKRFHQQALMELKILEALRKKDKDNTYNVVHMKDFFYFRNHFCITFELLGINLYELMKNNNFQGFSLSIVRRFTLSVLKCLQMLSVEKIIHCDLKPENIVLYQKGQASVKVIDFGSSCYEHQKVYTYIQSRFYRSPEVILGHPYDVAIDMWSLGCITAELYTGYPLFPGENEVEQLACIMEVLGLPPAGFIQTASRRQTFFDSKGFPKNITNNRGKKRYPDSKDLTMVLKTYDTSFLDFLRRCLVWEPSLRMTPDQALKHAWIHQSRNLKPQPRPQTLRKSNSFFPSETRKDKVQGCHHSSRKADEITKETTEKTKDSPTKHVQHSGDQQDCLQHGADTVQLPQLVDAPKKSEAAVGAEVSMTSPGQSKNFSLKNTNVLPPIV</sequence>
<accession>Q9NR20</accession>
<accession>A8K8F7</accession>
<accession>Q8NEF2</accession>
<accession>Q92631</accession>
<gene>
    <name type="primary">DYRK4</name>
</gene>
<organism>
    <name type="scientific">Homo sapiens</name>
    <name type="common">Human</name>
    <dbReference type="NCBI Taxonomy" id="9606"/>
    <lineage>
        <taxon>Eukaryota</taxon>
        <taxon>Metazoa</taxon>
        <taxon>Chordata</taxon>
        <taxon>Craniata</taxon>
        <taxon>Vertebrata</taxon>
        <taxon>Euteleostomi</taxon>
        <taxon>Mammalia</taxon>
        <taxon>Eutheria</taxon>
        <taxon>Euarchontoglires</taxon>
        <taxon>Primates</taxon>
        <taxon>Haplorrhini</taxon>
        <taxon>Catarrhini</taxon>
        <taxon>Hominidae</taxon>
        <taxon>Homo</taxon>
    </lineage>
</organism>
<protein>
    <recommendedName>
        <fullName>Dual specificity tyrosine-phosphorylation-regulated kinase 4</fullName>
        <ecNumber>2.7.12.1</ecNumber>
    </recommendedName>
</protein>
<keyword id="KW-0025">Alternative splicing</keyword>
<keyword id="KW-0067">ATP-binding</keyword>
<keyword id="KW-0963">Cytoplasm</keyword>
<keyword id="KW-0418">Kinase</keyword>
<keyword id="KW-0460">Magnesium</keyword>
<keyword id="KW-0479">Metal-binding</keyword>
<keyword id="KW-0547">Nucleotide-binding</keyword>
<keyword id="KW-0539">Nucleus</keyword>
<keyword id="KW-0597">Phosphoprotein</keyword>
<keyword id="KW-1267">Proteomics identification</keyword>
<keyword id="KW-1185">Reference proteome</keyword>
<keyword id="KW-0723">Serine/threonine-protein kinase</keyword>
<keyword id="KW-0808">Transferase</keyword>
<keyword id="KW-0829">Tyrosine-protein kinase</keyword>
<dbReference type="EC" id="2.7.12.1"/>
<dbReference type="EMBL" id="AF263541">
    <property type="protein sequence ID" value="AAF91393.1"/>
    <property type="status" value="ALT_INIT"/>
    <property type="molecule type" value="mRNA"/>
</dbReference>
<dbReference type="EMBL" id="AK292322">
    <property type="protein sequence ID" value="BAF85011.1"/>
    <property type="molecule type" value="mRNA"/>
</dbReference>
<dbReference type="EMBL" id="AK308260">
    <property type="status" value="NOT_ANNOTATED_CDS"/>
    <property type="molecule type" value="mRNA"/>
</dbReference>
<dbReference type="EMBL" id="BC031244">
    <property type="protein sequence ID" value="AAH31244.1"/>
    <property type="molecule type" value="mRNA"/>
</dbReference>
<dbReference type="EMBL" id="Y09305">
    <property type="protein sequence ID" value="CAA70488.1"/>
    <property type="molecule type" value="mRNA"/>
</dbReference>
<dbReference type="CCDS" id="CCDS8530.1">
    <molecule id="Q9NR20-1"/>
</dbReference>
<dbReference type="RefSeq" id="NP_001358230.1">
    <molecule id="Q9NR20-3"/>
    <property type="nucleotide sequence ID" value="NM_001371301.2"/>
</dbReference>
<dbReference type="RefSeq" id="NP_001393948.1">
    <molecule id="Q9NR20-1"/>
    <property type="nucleotide sequence ID" value="NM_001407019.1"/>
</dbReference>
<dbReference type="RefSeq" id="NP_003836.1">
    <molecule id="Q9NR20-1"/>
    <property type="nucleotide sequence ID" value="NM_003845.3"/>
</dbReference>
<dbReference type="SMR" id="Q9NR20"/>
<dbReference type="BioGRID" id="114326">
    <property type="interactions" value="40"/>
</dbReference>
<dbReference type="FunCoup" id="Q9NR20">
    <property type="interactions" value="2364"/>
</dbReference>
<dbReference type="IntAct" id="Q9NR20">
    <property type="interactions" value="32"/>
</dbReference>
<dbReference type="STRING" id="9606.ENSP00000441755"/>
<dbReference type="BindingDB" id="Q9NR20"/>
<dbReference type="ChEMBL" id="CHEMBL1075115"/>
<dbReference type="GuidetoPHARMACOLOGY" id="2013"/>
<dbReference type="GlyGen" id="Q9NR20">
    <property type="glycosylation" value="1 site, 1 O-linked glycan (1 site)"/>
</dbReference>
<dbReference type="iPTMnet" id="Q9NR20"/>
<dbReference type="PhosphoSitePlus" id="Q9NR20"/>
<dbReference type="BioMuta" id="DYRK4"/>
<dbReference type="DMDM" id="68566308"/>
<dbReference type="jPOST" id="Q9NR20"/>
<dbReference type="MassIVE" id="Q9NR20"/>
<dbReference type="PaxDb" id="9606-ENSP00000441755"/>
<dbReference type="PeptideAtlas" id="Q9NR20"/>
<dbReference type="ProteomicsDB" id="82254">
    <molecule id="Q9NR20-1"/>
</dbReference>
<dbReference type="ProteomicsDB" id="82255">
    <molecule id="Q9NR20-2"/>
</dbReference>
<dbReference type="Antibodypedia" id="22291">
    <property type="antibodies" value="289 antibodies from 28 providers"/>
</dbReference>
<dbReference type="DNASU" id="8798"/>
<dbReference type="Ensembl" id="ENST00000010132.6">
    <molecule id="Q9NR20-1"/>
    <property type="protein sequence ID" value="ENSP00000010132.5"/>
    <property type="gene ID" value="ENSG00000010219.14"/>
</dbReference>
<dbReference type="Ensembl" id="ENST00000540757.6">
    <molecule id="Q9NR20-1"/>
    <property type="protein sequence ID" value="ENSP00000441755.1"/>
    <property type="gene ID" value="ENSG00000010219.14"/>
</dbReference>
<dbReference type="GeneID" id="8798"/>
<dbReference type="KEGG" id="hsa:8798"/>
<dbReference type="UCSC" id="uc001qmx.5">
    <molecule id="Q9NR20-1"/>
    <property type="organism name" value="human"/>
</dbReference>
<dbReference type="AGR" id="HGNC:3095"/>
<dbReference type="CTD" id="8798"/>
<dbReference type="DisGeNET" id="8798"/>
<dbReference type="GeneCards" id="DYRK4"/>
<dbReference type="HGNC" id="HGNC:3095">
    <property type="gene designation" value="DYRK4"/>
</dbReference>
<dbReference type="HPA" id="ENSG00000010219">
    <property type="expression patterns" value="Tissue enhanced (testis)"/>
</dbReference>
<dbReference type="MIM" id="609181">
    <property type="type" value="gene"/>
</dbReference>
<dbReference type="neXtProt" id="NX_Q9NR20"/>
<dbReference type="OpenTargets" id="ENSG00000010219"/>
<dbReference type="PharmGKB" id="PA27552"/>
<dbReference type="VEuPathDB" id="HostDB:ENSG00000010219"/>
<dbReference type="eggNOG" id="KOG0667">
    <property type="taxonomic scope" value="Eukaryota"/>
</dbReference>
<dbReference type="GeneTree" id="ENSGT00940000159401"/>
<dbReference type="HOGENOM" id="CLU_000288_5_9_1"/>
<dbReference type="InParanoid" id="Q9NR20"/>
<dbReference type="OrthoDB" id="9332038at2759"/>
<dbReference type="PAN-GO" id="Q9NR20">
    <property type="GO annotations" value="6 GO annotations based on evolutionary models"/>
</dbReference>
<dbReference type="PhylomeDB" id="Q9NR20"/>
<dbReference type="TreeFam" id="TF314624"/>
<dbReference type="BRENDA" id="2.7.12.1">
    <property type="organism ID" value="2681"/>
</dbReference>
<dbReference type="PathwayCommons" id="Q9NR20"/>
<dbReference type="SignaLink" id="Q9NR20"/>
<dbReference type="SIGNOR" id="Q9NR20"/>
<dbReference type="BioGRID-ORCS" id="8798">
    <property type="hits" value="11 hits in 1190 CRISPR screens"/>
</dbReference>
<dbReference type="ChiTaRS" id="DYRK4">
    <property type="organism name" value="human"/>
</dbReference>
<dbReference type="GenomeRNAi" id="8798"/>
<dbReference type="Pharos" id="Q9NR20">
    <property type="development level" value="Tchem"/>
</dbReference>
<dbReference type="PRO" id="PR:Q9NR20"/>
<dbReference type="Proteomes" id="UP000005640">
    <property type="component" value="Chromosome 12"/>
</dbReference>
<dbReference type="RNAct" id="Q9NR20">
    <property type="molecule type" value="protein"/>
</dbReference>
<dbReference type="Bgee" id="ENSG00000010219">
    <property type="expression patterns" value="Expressed in left testis and 169 other cell types or tissues"/>
</dbReference>
<dbReference type="ExpressionAtlas" id="Q9NR20">
    <property type="expression patterns" value="baseline and differential"/>
</dbReference>
<dbReference type="GO" id="GO:0005737">
    <property type="term" value="C:cytoplasm"/>
    <property type="evidence" value="ECO:0000318"/>
    <property type="project" value="GO_Central"/>
</dbReference>
<dbReference type="GO" id="GO:0005856">
    <property type="term" value="C:cytoskeleton"/>
    <property type="evidence" value="ECO:0000318"/>
    <property type="project" value="GO_Central"/>
</dbReference>
<dbReference type="GO" id="GO:0043231">
    <property type="term" value="C:intracellular membrane-bounded organelle"/>
    <property type="evidence" value="ECO:0000314"/>
    <property type="project" value="HPA"/>
</dbReference>
<dbReference type="GO" id="GO:0005634">
    <property type="term" value="C:nucleus"/>
    <property type="evidence" value="ECO:0000318"/>
    <property type="project" value="GO_Central"/>
</dbReference>
<dbReference type="GO" id="GO:0005524">
    <property type="term" value="F:ATP binding"/>
    <property type="evidence" value="ECO:0007669"/>
    <property type="project" value="UniProtKB-KW"/>
</dbReference>
<dbReference type="GO" id="GO:0046872">
    <property type="term" value="F:metal ion binding"/>
    <property type="evidence" value="ECO:0007669"/>
    <property type="project" value="UniProtKB-KW"/>
</dbReference>
<dbReference type="GO" id="GO:0106310">
    <property type="term" value="F:protein serine kinase activity"/>
    <property type="evidence" value="ECO:0007669"/>
    <property type="project" value="RHEA"/>
</dbReference>
<dbReference type="GO" id="GO:0004674">
    <property type="term" value="F:protein serine/threonine kinase activity"/>
    <property type="evidence" value="ECO:0000318"/>
    <property type="project" value="GO_Central"/>
</dbReference>
<dbReference type="GO" id="GO:0004712">
    <property type="term" value="F:protein serine/threonine/tyrosine kinase activity"/>
    <property type="evidence" value="ECO:0007669"/>
    <property type="project" value="UniProtKB-EC"/>
</dbReference>
<dbReference type="GO" id="GO:0004713">
    <property type="term" value="F:protein tyrosine kinase activity"/>
    <property type="evidence" value="ECO:0007669"/>
    <property type="project" value="UniProtKB-KW"/>
</dbReference>
<dbReference type="CDD" id="cd14225">
    <property type="entry name" value="PKc_DYRK4"/>
    <property type="match status" value="1"/>
</dbReference>
<dbReference type="FunFam" id="3.30.10.30:FF:000002">
    <property type="entry name" value="Dual specificity tyrosine-phosphorylation-regulated kinase 4"/>
    <property type="match status" value="1"/>
</dbReference>
<dbReference type="FunFam" id="1.10.510.10:FF:000112">
    <property type="entry name" value="Putative dual specificity tyrosine-phosphorylation-regulated kinase 2"/>
    <property type="match status" value="1"/>
</dbReference>
<dbReference type="FunFam" id="3.30.200.20:FF:000127">
    <property type="entry name" value="Putative dual specificity tyrosine-phosphorylation-regulated kinase 2"/>
    <property type="match status" value="1"/>
</dbReference>
<dbReference type="Gene3D" id="3.30.10.30">
    <property type="entry name" value="DYRK"/>
    <property type="match status" value="1"/>
</dbReference>
<dbReference type="Gene3D" id="3.30.200.20">
    <property type="entry name" value="Phosphorylase Kinase, domain 1"/>
    <property type="match status" value="1"/>
</dbReference>
<dbReference type="Gene3D" id="1.10.510.10">
    <property type="entry name" value="Transferase(Phosphotransferase) domain 1"/>
    <property type="match status" value="1"/>
</dbReference>
<dbReference type="InterPro" id="IPR042521">
    <property type="entry name" value="DYRK"/>
</dbReference>
<dbReference type="InterPro" id="IPR011009">
    <property type="entry name" value="Kinase-like_dom_sf"/>
</dbReference>
<dbReference type="InterPro" id="IPR000719">
    <property type="entry name" value="Prot_kinase_dom"/>
</dbReference>
<dbReference type="InterPro" id="IPR017441">
    <property type="entry name" value="Protein_kinase_ATP_BS"/>
</dbReference>
<dbReference type="InterPro" id="IPR008271">
    <property type="entry name" value="Ser/Thr_kinase_AS"/>
</dbReference>
<dbReference type="InterPro" id="IPR050494">
    <property type="entry name" value="Ser_Thr_dual-spec_kinase"/>
</dbReference>
<dbReference type="PANTHER" id="PTHR24058">
    <property type="entry name" value="DUAL SPECIFICITY PROTEIN KINASE"/>
    <property type="match status" value="1"/>
</dbReference>
<dbReference type="PANTHER" id="PTHR24058:SF22">
    <property type="entry name" value="DUAL SPECIFICITY TYROSINE-PHOSPHORYLATION-REGULATED KINASE 4"/>
    <property type="match status" value="1"/>
</dbReference>
<dbReference type="Pfam" id="PF00069">
    <property type="entry name" value="Pkinase"/>
    <property type="match status" value="1"/>
</dbReference>
<dbReference type="SMART" id="SM00220">
    <property type="entry name" value="S_TKc"/>
    <property type="match status" value="1"/>
</dbReference>
<dbReference type="SUPFAM" id="SSF56112">
    <property type="entry name" value="Protein kinase-like (PK-like)"/>
    <property type="match status" value="1"/>
</dbReference>
<dbReference type="PROSITE" id="PS00107">
    <property type="entry name" value="PROTEIN_KINASE_ATP"/>
    <property type="match status" value="1"/>
</dbReference>
<dbReference type="PROSITE" id="PS50011">
    <property type="entry name" value="PROTEIN_KINASE_DOM"/>
    <property type="match status" value="1"/>
</dbReference>
<dbReference type="PROSITE" id="PS00108">
    <property type="entry name" value="PROTEIN_KINASE_ST"/>
    <property type="match status" value="1"/>
</dbReference>
<proteinExistence type="evidence at protein level"/>
<name>DYRK4_HUMAN</name>
<comment type="function">
    <text evidence="1">Possible non-essential role in spermiogenesis.</text>
</comment>
<comment type="catalytic activity">
    <reaction>
        <text>L-seryl-[protein] + ATP = O-phospho-L-seryl-[protein] + ADP + H(+)</text>
        <dbReference type="Rhea" id="RHEA:17989"/>
        <dbReference type="Rhea" id="RHEA-COMP:9863"/>
        <dbReference type="Rhea" id="RHEA-COMP:11604"/>
        <dbReference type="ChEBI" id="CHEBI:15378"/>
        <dbReference type="ChEBI" id="CHEBI:29999"/>
        <dbReference type="ChEBI" id="CHEBI:30616"/>
        <dbReference type="ChEBI" id="CHEBI:83421"/>
        <dbReference type="ChEBI" id="CHEBI:456216"/>
        <dbReference type="EC" id="2.7.12.1"/>
    </reaction>
</comment>
<comment type="catalytic activity">
    <reaction>
        <text>L-threonyl-[protein] + ATP = O-phospho-L-threonyl-[protein] + ADP + H(+)</text>
        <dbReference type="Rhea" id="RHEA:46608"/>
        <dbReference type="Rhea" id="RHEA-COMP:11060"/>
        <dbReference type="Rhea" id="RHEA-COMP:11605"/>
        <dbReference type="ChEBI" id="CHEBI:15378"/>
        <dbReference type="ChEBI" id="CHEBI:30013"/>
        <dbReference type="ChEBI" id="CHEBI:30616"/>
        <dbReference type="ChEBI" id="CHEBI:61977"/>
        <dbReference type="ChEBI" id="CHEBI:456216"/>
        <dbReference type="EC" id="2.7.12.1"/>
    </reaction>
</comment>
<comment type="catalytic activity">
    <reaction>
        <text>L-tyrosyl-[protein] + ATP = O-phospho-L-tyrosyl-[protein] + ADP + H(+)</text>
        <dbReference type="Rhea" id="RHEA:10596"/>
        <dbReference type="Rhea" id="RHEA-COMP:10136"/>
        <dbReference type="Rhea" id="RHEA-COMP:20101"/>
        <dbReference type="ChEBI" id="CHEBI:15378"/>
        <dbReference type="ChEBI" id="CHEBI:30616"/>
        <dbReference type="ChEBI" id="CHEBI:46858"/>
        <dbReference type="ChEBI" id="CHEBI:61978"/>
        <dbReference type="ChEBI" id="CHEBI:456216"/>
        <dbReference type="EC" id="2.7.12.1"/>
    </reaction>
</comment>
<comment type="cofactor">
    <cofactor evidence="1">
        <name>Mg(2+)</name>
        <dbReference type="ChEBI" id="CHEBI:18420"/>
    </cofactor>
</comment>
<comment type="interaction">
    <interactant intactId="EBI-3914009">
        <id>Q9NR20</id>
    </interactant>
    <interactant intactId="EBI-749432">
        <id>Q92630</id>
        <label>DYRK2</label>
    </interactant>
    <organismsDiffer>false</organismsDiffer>
    <experiments>3</experiments>
</comment>
<comment type="interaction">
    <interactant intactId="EBI-3914009">
        <id>Q9NR20</id>
    </interactant>
    <interactant intactId="EBI-296047">
        <id>P07900</id>
        <label>HSP90AA1</label>
    </interactant>
    <organismsDiffer>false</organismsDiffer>
    <experiments>2</experiments>
</comment>
<comment type="interaction">
    <interactant intactId="EBI-3914009">
        <id>Q9NR20</id>
    </interactant>
    <interactant intactId="EBI-352572">
        <id>P08238</id>
        <label>HSP90AB1</label>
    </interactant>
    <organismsDiffer>false</organismsDiffer>
    <experiments>2</experiments>
</comment>
<comment type="interaction">
    <interactant intactId="EBI-3914009">
        <id>Q9NR20</id>
    </interactant>
    <interactant intactId="EBI-2340316">
        <id>O15344</id>
        <label>MID1</label>
    </interactant>
    <organismsDiffer>false</organismsDiffer>
    <experiments>3</experiments>
</comment>
<comment type="interaction">
    <interactant intactId="EBI-3914009">
        <id>Q9NR20</id>
    </interactant>
    <interactant intactId="EBI-356498">
        <id>P62258</id>
        <label>YWHAE</label>
    </interactant>
    <organismsDiffer>false</organismsDiffer>
    <experiments>2</experiments>
</comment>
<comment type="subcellular location">
    <molecule>Isoform 1</molecule>
    <subcellularLocation>
        <location evidence="6">Cytoplasm</location>
    </subcellularLocation>
</comment>
<comment type="subcellular location">
    <molecule>Isoform 4</molecule>
    <subcellularLocation>
        <location evidence="8">Cytoplasm</location>
    </subcellularLocation>
    <subcellularLocation>
        <location evidence="8">Nucleus</location>
    </subcellularLocation>
</comment>
<comment type="alternative products">
    <event type="alternative splicing"/>
    <isoform>
        <id>Q9NR20-1</id>
        <name>1</name>
        <sequence type="displayed"/>
    </isoform>
    <isoform>
        <id>Q9NR20-2</id>
        <name>2</name>
        <sequence type="described" ref="VSP_013745"/>
    </isoform>
    <isoform>
        <id>Q9NR20-3</id>
        <name>3</name>
        <sequence type="described" ref="VSP_057132"/>
    </isoform>
    <isoform>
        <id>Q9NR20-4</id>
        <name>4</name>
        <name>DYRK4-L</name>
        <sequence type="described" ref="VSP_057133"/>
    </isoform>
    <isoform>
        <id>Q9NR20-5</id>
        <name>5</name>
        <sequence type="described" ref="VSP_057134"/>
    </isoform>
</comment>
<comment type="PTM">
    <text evidence="8">Autophosphorylation on Tyr-264 in the activation loop is required for kinase activity.</text>
</comment>
<comment type="miscellaneous">
    <molecule>Isoform 1</molecule>
    <text>May be due to a competing acceptor splice site.</text>
</comment>
<comment type="miscellaneous">
    <molecule>Isoform 5</molecule>
    <text evidence="8">Due to an alternative splicing donor site in exon 19. Markedly reduced enzymatic activity.</text>
</comment>
<comment type="similarity">
    <text evidence="13">Belongs to the protein kinase superfamily. CMGC Ser/Thr protein kinase family. MNB/DYRK subfamily.</text>
</comment>
<comment type="sequence caution" evidence="13">
    <conflict type="erroneous initiation">
        <sequence resource="EMBL-CDS" id="AAF91393"/>
    </conflict>
</comment>
<comment type="sequence caution" evidence="13">
    <conflict type="frameshift">
        <sequence resource="EMBL" id="AK308260"/>
    </conflict>
</comment>